<evidence type="ECO:0000255" key="1">
    <source>
        <dbReference type="HAMAP-Rule" id="MF_00600"/>
    </source>
</evidence>
<proteinExistence type="inferred from homology"/>
<keyword id="KW-0067">ATP-binding</keyword>
<keyword id="KW-0143">Chaperone</keyword>
<keyword id="KW-0963">Cytoplasm</keyword>
<keyword id="KW-0413">Isomerase</keyword>
<keyword id="KW-0547">Nucleotide-binding</keyword>
<sequence length="545" mass="58952">MAKDIYFNEDARKSLLSGVEKLSNAVKVTLGPKGRNVLIDKKFGSPTVTKDGVSVAREIELENPFENMGAQLLKEVAIKTNDVAGDGTTTATVLAYAIAREGLKNVSSGINPIGIKKGIDHAVNLAAEKIRQSAKKITTKEEIAQVASISANNDSYIGEKIAEAMDKVGKDGVITVEESKTFDTTISYVEGMQFDRGYLSPYFSTNKENMSVNFDDAFILIYEKKISSIKELLPVLEKVLGTNKPLLIIAEDIEGDALAALVLNSVRGALKVCAIKSPGFGDRRKAMLEDIAVLTGGVLISEELGLTLETVEIEQLGQAKTIKVDKDNTTIINTGNKEQIKERSELIKKQIEDSTSEYDKEKLQERLAKLVGGVAVINVGAVTEVELKEKKHRVEDALSATRAAVEEGVVPGGGSTLIEVAMYLDTIDTSKLSYEEKQGFEIVKRSLEEPMRQIISNAGFEGSIYIHQIKTEKKGLGFDASSFKWVNMIESGIIDPAKVTRSALQNAASIAGLLLTTECAITDIKEEKNTSGGGGYPMDPGMGMM</sequence>
<feature type="chain" id="PRO_1000129978" description="Chaperonin GroEL">
    <location>
        <begin position="1"/>
        <end position="545"/>
    </location>
</feature>
<feature type="binding site" evidence="1">
    <location>
        <begin position="29"/>
        <end position="32"/>
    </location>
    <ligand>
        <name>ATP</name>
        <dbReference type="ChEBI" id="CHEBI:30616"/>
    </ligand>
</feature>
<feature type="binding site" evidence="1">
    <location>
        <position position="50"/>
    </location>
    <ligand>
        <name>ATP</name>
        <dbReference type="ChEBI" id="CHEBI:30616"/>
    </ligand>
</feature>
<feature type="binding site" evidence="1">
    <location>
        <begin position="86"/>
        <end position="90"/>
    </location>
    <ligand>
        <name>ATP</name>
        <dbReference type="ChEBI" id="CHEBI:30616"/>
    </ligand>
</feature>
<feature type="binding site" evidence="1">
    <location>
        <position position="413"/>
    </location>
    <ligand>
        <name>ATP</name>
        <dbReference type="ChEBI" id="CHEBI:30616"/>
    </ligand>
</feature>
<feature type="binding site" evidence="1">
    <location>
        <position position="495"/>
    </location>
    <ligand>
        <name>ATP</name>
        <dbReference type="ChEBI" id="CHEBI:30616"/>
    </ligand>
</feature>
<dbReference type="EC" id="5.6.1.7" evidence="1"/>
<dbReference type="EMBL" id="X65139">
    <property type="protein sequence ID" value="CAA46269.1"/>
    <property type="molecule type" value="Genomic_DNA"/>
</dbReference>
<dbReference type="EMBL" id="CP001205">
    <property type="protein sequence ID" value="ACK75110.1"/>
    <property type="molecule type" value="Genomic_DNA"/>
</dbReference>
<dbReference type="PIR" id="H70180">
    <property type="entry name" value="H70180"/>
</dbReference>
<dbReference type="RefSeq" id="WP_002657108.1">
    <property type="nucleotide sequence ID" value="NC_011728.1"/>
</dbReference>
<dbReference type="SMR" id="B7J2K5"/>
<dbReference type="GeneID" id="56567459"/>
<dbReference type="KEGG" id="bbz:BbuZS7_0669"/>
<dbReference type="HOGENOM" id="CLU_016503_3_0_12"/>
<dbReference type="Proteomes" id="UP000006901">
    <property type="component" value="Chromosome"/>
</dbReference>
<dbReference type="GO" id="GO:0005737">
    <property type="term" value="C:cytoplasm"/>
    <property type="evidence" value="ECO:0007669"/>
    <property type="project" value="UniProtKB-SubCell"/>
</dbReference>
<dbReference type="GO" id="GO:0005524">
    <property type="term" value="F:ATP binding"/>
    <property type="evidence" value="ECO:0007669"/>
    <property type="project" value="UniProtKB-UniRule"/>
</dbReference>
<dbReference type="GO" id="GO:0140662">
    <property type="term" value="F:ATP-dependent protein folding chaperone"/>
    <property type="evidence" value="ECO:0007669"/>
    <property type="project" value="InterPro"/>
</dbReference>
<dbReference type="GO" id="GO:0016853">
    <property type="term" value="F:isomerase activity"/>
    <property type="evidence" value="ECO:0007669"/>
    <property type="project" value="UniProtKB-KW"/>
</dbReference>
<dbReference type="GO" id="GO:0051082">
    <property type="term" value="F:unfolded protein binding"/>
    <property type="evidence" value="ECO:0007669"/>
    <property type="project" value="UniProtKB-UniRule"/>
</dbReference>
<dbReference type="GO" id="GO:0042026">
    <property type="term" value="P:protein refolding"/>
    <property type="evidence" value="ECO:0007669"/>
    <property type="project" value="UniProtKB-UniRule"/>
</dbReference>
<dbReference type="CDD" id="cd03344">
    <property type="entry name" value="GroEL"/>
    <property type="match status" value="1"/>
</dbReference>
<dbReference type="FunFam" id="3.50.7.10:FF:000001">
    <property type="entry name" value="60 kDa chaperonin"/>
    <property type="match status" value="1"/>
</dbReference>
<dbReference type="Gene3D" id="3.50.7.10">
    <property type="entry name" value="GroEL"/>
    <property type="match status" value="1"/>
</dbReference>
<dbReference type="Gene3D" id="1.10.560.10">
    <property type="entry name" value="GroEL-like equatorial domain"/>
    <property type="match status" value="1"/>
</dbReference>
<dbReference type="Gene3D" id="3.30.260.10">
    <property type="entry name" value="TCP-1-like chaperonin intermediate domain"/>
    <property type="match status" value="1"/>
</dbReference>
<dbReference type="HAMAP" id="MF_00600">
    <property type="entry name" value="CH60"/>
    <property type="match status" value="1"/>
</dbReference>
<dbReference type="InterPro" id="IPR018370">
    <property type="entry name" value="Chaperonin_Cpn60_CS"/>
</dbReference>
<dbReference type="InterPro" id="IPR001844">
    <property type="entry name" value="Cpn60/GroEL"/>
</dbReference>
<dbReference type="InterPro" id="IPR002423">
    <property type="entry name" value="Cpn60/GroEL/TCP-1"/>
</dbReference>
<dbReference type="InterPro" id="IPR027409">
    <property type="entry name" value="GroEL-like_apical_dom_sf"/>
</dbReference>
<dbReference type="InterPro" id="IPR027413">
    <property type="entry name" value="GROEL-like_equatorial_sf"/>
</dbReference>
<dbReference type="InterPro" id="IPR027410">
    <property type="entry name" value="TCP-1-like_intermed_sf"/>
</dbReference>
<dbReference type="NCBIfam" id="TIGR02348">
    <property type="entry name" value="GroEL"/>
    <property type="match status" value="1"/>
</dbReference>
<dbReference type="NCBIfam" id="NF000592">
    <property type="entry name" value="PRK00013.1"/>
    <property type="match status" value="1"/>
</dbReference>
<dbReference type="NCBIfam" id="NF009487">
    <property type="entry name" value="PRK12849.1"/>
    <property type="match status" value="1"/>
</dbReference>
<dbReference type="NCBIfam" id="NF009488">
    <property type="entry name" value="PRK12850.1"/>
    <property type="match status" value="1"/>
</dbReference>
<dbReference type="NCBIfam" id="NF009489">
    <property type="entry name" value="PRK12851.1"/>
    <property type="match status" value="1"/>
</dbReference>
<dbReference type="PANTHER" id="PTHR45633">
    <property type="entry name" value="60 KDA HEAT SHOCK PROTEIN, MITOCHONDRIAL"/>
    <property type="match status" value="1"/>
</dbReference>
<dbReference type="Pfam" id="PF00118">
    <property type="entry name" value="Cpn60_TCP1"/>
    <property type="match status" value="1"/>
</dbReference>
<dbReference type="PRINTS" id="PR00298">
    <property type="entry name" value="CHAPERONIN60"/>
</dbReference>
<dbReference type="SUPFAM" id="SSF52029">
    <property type="entry name" value="GroEL apical domain-like"/>
    <property type="match status" value="1"/>
</dbReference>
<dbReference type="SUPFAM" id="SSF48592">
    <property type="entry name" value="GroEL equatorial domain-like"/>
    <property type="match status" value="1"/>
</dbReference>
<dbReference type="SUPFAM" id="SSF54849">
    <property type="entry name" value="GroEL-intermediate domain like"/>
    <property type="match status" value="1"/>
</dbReference>
<dbReference type="PROSITE" id="PS00296">
    <property type="entry name" value="CHAPERONINS_CPN60"/>
    <property type="match status" value="1"/>
</dbReference>
<comment type="function">
    <text evidence="1">Together with its co-chaperonin GroES, plays an essential role in assisting protein folding. The GroEL-GroES system forms a nano-cage that allows encapsulation of the non-native substrate proteins and provides a physical environment optimized to promote and accelerate protein folding.</text>
</comment>
<comment type="catalytic activity">
    <reaction evidence="1">
        <text>ATP + H2O + a folded polypeptide = ADP + phosphate + an unfolded polypeptide.</text>
        <dbReference type="EC" id="5.6.1.7"/>
    </reaction>
</comment>
<comment type="subunit">
    <text evidence="1">Forms a cylinder of 14 subunits composed of two heptameric rings stacked back-to-back. Interacts with the co-chaperonin GroES.</text>
</comment>
<comment type="subcellular location">
    <subcellularLocation>
        <location evidence="1">Cytoplasm</location>
    </subcellularLocation>
</comment>
<comment type="similarity">
    <text evidence="1">Belongs to the chaperonin (HSP60) family.</text>
</comment>
<reference key="1">
    <citation type="journal article" date="1992" name="Infect. Immun.">
        <title>Evaluation of genetic divergence among Borrelia burgdorferi isolates by use of OspA, fla, HSP60, and HSP70 gene probes.</title>
        <authorList>
            <person name="Wallich R."/>
            <person name="Helmes C."/>
            <person name="Schaible U.E."/>
            <person name="Lobet Y."/>
            <person name="Moter S.E."/>
            <person name="Kramer M.D."/>
            <person name="Simon M.M."/>
        </authorList>
    </citation>
    <scope>NUCLEOTIDE SEQUENCE [GENOMIC DNA]</scope>
</reference>
<reference key="2">
    <citation type="journal article" date="2011" name="J. Bacteriol.">
        <title>Whole-genome sequences of thirteen isolates of Borrelia burgdorferi.</title>
        <authorList>
            <person name="Schutzer S.E."/>
            <person name="Fraser-Liggett C.M."/>
            <person name="Casjens S.R."/>
            <person name="Qiu W.G."/>
            <person name="Dunn J.J."/>
            <person name="Mongodin E.F."/>
            <person name="Luft B.J."/>
        </authorList>
    </citation>
    <scope>NUCLEOTIDE SEQUENCE [LARGE SCALE GENOMIC DNA]</scope>
    <source>
        <strain>ZS7</strain>
    </source>
</reference>
<accession>B7J2K5</accession>
<accession>P27575</accession>
<organism>
    <name type="scientific">Borreliella burgdorferi (strain ZS7)</name>
    <name type="common">Borrelia burgdorferi</name>
    <dbReference type="NCBI Taxonomy" id="445985"/>
    <lineage>
        <taxon>Bacteria</taxon>
        <taxon>Pseudomonadati</taxon>
        <taxon>Spirochaetota</taxon>
        <taxon>Spirochaetia</taxon>
        <taxon>Spirochaetales</taxon>
        <taxon>Borreliaceae</taxon>
        <taxon>Borreliella</taxon>
    </lineage>
</organism>
<name>CH60_BORBZ</name>
<gene>
    <name evidence="1" type="primary">groEL</name>
    <name evidence="1" type="synonym">groL</name>
    <name type="synonym">mopA</name>
    <name type="ordered locus">BbuZS7_0669</name>
</gene>
<protein>
    <recommendedName>
        <fullName evidence="1">Chaperonin GroEL</fullName>
        <ecNumber evidence="1">5.6.1.7</ecNumber>
    </recommendedName>
    <alternativeName>
        <fullName evidence="1">60 kDa chaperonin</fullName>
    </alternativeName>
    <alternativeName>
        <fullName evidence="1">Chaperonin-60</fullName>
        <shortName evidence="1">Cpn60</shortName>
    </alternativeName>
</protein>